<keyword id="KW-1003">Cell membrane</keyword>
<keyword id="KW-0472">Membrane</keyword>
<keyword id="KW-0520">NAD</keyword>
<keyword id="KW-0874">Quinone</keyword>
<keyword id="KW-1185">Reference proteome</keyword>
<keyword id="KW-1278">Translocase</keyword>
<keyword id="KW-0812">Transmembrane</keyword>
<keyword id="KW-1133">Transmembrane helix</keyword>
<keyword id="KW-0830">Ubiquinone</keyword>
<dbReference type="EC" id="7.1.1.-" evidence="1"/>
<dbReference type="EMBL" id="BA000030">
    <property type="protein sequence ID" value="BAC72556.1"/>
    <property type="molecule type" value="Genomic_DNA"/>
</dbReference>
<dbReference type="RefSeq" id="WP_010986265.1">
    <property type="nucleotide sequence ID" value="NZ_JZJK01000077.1"/>
</dbReference>
<dbReference type="SMR" id="Q82DX4"/>
<dbReference type="GeneID" id="41541924"/>
<dbReference type="KEGG" id="sma:SAVERM_4844"/>
<dbReference type="eggNOG" id="COG1005">
    <property type="taxonomic scope" value="Bacteria"/>
</dbReference>
<dbReference type="HOGENOM" id="CLU_015134_0_0_11"/>
<dbReference type="OrthoDB" id="9803734at2"/>
<dbReference type="Proteomes" id="UP000000428">
    <property type="component" value="Chromosome"/>
</dbReference>
<dbReference type="GO" id="GO:0005886">
    <property type="term" value="C:plasma membrane"/>
    <property type="evidence" value="ECO:0007669"/>
    <property type="project" value="UniProtKB-SubCell"/>
</dbReference>
<dbReference type="GO" id="GO:0003954">
    <property type="term" value="F:NADH dehydrogenase activity"/>
    <property type="evidence" value="ECO:0007669"/>
    <property type="project" value="TreeGrafter"/>
</dbReference>
<dbReference type="GO" id="GO:0016655">
    <property type="term" value="F:oxidoreductase activity, acting on NAD(P)H, quinone or similar compound as acceptor"/>
    <property type="evidence" value="ECO:0007669"/>
    <property type="project" value="UniProtKB-UniRule"/>
</dbReference>
<dbReference type="GO" id="GO:0048038">
    <property type="term" value="F:quinone binding"/>
    <property type="evidence" value="ECO:0007669"/>
    <property type="project" value="UniProtKB-KW"/>
</dbReference>
<dbReference type="GO" id="GO:0009060">
    <property type="term" value="P:aerobic respiration"/>
    <property type="evidence" value="ECO:0007669"/>
    <property type="project" value="TreeGrafter"/>
</dbReference>
<dbReference type="HAMAP" id="MF_01350">
    <property type="entry name" value="NDH1_NuoH"/>
    <property type="match status" value="1"/>
</dbReference>
<dbReference type="InterPro" id="IPR001694">
    <property type="entry name" value="NADH_UbQ_OxRdtase_su1/FPO"/>
</dbReference>
<dbReference type="InterPro" id="IPR018086">
    <property type="entry name" value="NADH_UbQ_OxRdtase_su1_CS"/>
</dbReference>
<dbReference type="NCBIfam" id="NF004741">
    <property type="entry name" value="PRK06076.1-2"/>
    <property type="match status" value="1"/>
</dbReference>
<dbReference type="NCBIfam" id="NF004743">
    <property type="entry name" value="PRK06076.1-4"/>
    <property type="match status" value="1"/>
</dbReference>
<dbReference type="PANTHER" id="PTHR11432">
    <property type="entry name" value="NADH DEHYDROGENASE SUBUNIT 1"/>
    <property type="match status" value="1"/>
</dbReference>
<dbReference type="PANTHER" id="PTHR11432:SF3">
    <property type="entry name" value="NADH-UBIQUINONE OXIDOREDUCTASE CHAIN 1"/>
    <property type="match status" value="1"/>
</dbReference>
<dbReference type="Pfam" id="PF00146">
    <property type="entry name" value="NADHdh"/>
    <property type="match status" value="1"/>
</dbReference>
<dbReference type="PROSITE" id="PS00667">
    <property type="entry name" value="COMPLEX1_ND1_1"/>
    <property type="match status" value="1"/>
</dbReference>
<dbReference type="PROSITE" id="PS00668">
    <property type="entry name" value="COMPLEX1_ND1_2"/>
    <property type="match status" value="1"/>
</dbReference>
<protein>
    <recommendedName>
        <fullName evidence="1">NADH-quinone oxidoreductase subunit H</fullName>
        <ecNumber evidence="1">7.1.1.-</ecNumber>
    </recommendedName>
    <alternativeName>
        <fullName evidence="1">NADH dehydrogenase I subunit H</fullName>
    </alternativeName>
    <alternativeName>
        <fullName evidence="1">NDH-1 subunit H</fullName>
    </alternativeName>
</protein>
<comment type="function">
    <text evidence="1">NDH-1 shuttles electrons from NADH, via FMN and iron-sulfur (Fe-S) centers, to quinones in the respiratory chain. The immediate electron acceptor for the enzyme in this species is believed to be ubiquinone. Couples the redox reaction to proton translocation (for every two electrons transferred, four hydrogen ions are translocated across the cytoplasmic membrane), and thus conserves the redox energy in a proton gradient. This subunit may bind ubiquinone.</text>
</comment>
<comment type="catalytic activity">
    <reaction evidence="1">
        <text>a quinone + NADH + 5 H(+)(in) = a quinol + NAD(+) + 4 H(+)(out)</text>
        <dbReference type="Rhea" id="RHEA:57888"/>
        <dbReference type="ChEBI" id="CHEBI:15378"/>
        <dbReference type="ChEBI" id="CHEBI:24646"/>
        <dbReference type="ChEBI" id="CHEBI:57540"/>
        <dbReference type="ChEBI" id="CHEBI:57945"/>
        <dbReference type="ChEBI" id="CHEBI:132124"/>
    </reaction>
</comment>
<comment type="subunit">
    <text evidence="1">NDH-1 is composed of 14 different subunits. Subunits NuoA, H, J, K, L, M, N constitute the membrane sector of the complex.</text>
</comment>
<comment type="subcellular location">
    <subcellularLocation>
        <location evidence="1">Cell membrane</location>
        <topology evidence="1">Multi-pass membrane protein</topology>
    </subcellularLocation>
</comment>
<comment type="similarity">
    <text evidence="1">Belongs to the complex I subunit 1 family.</text>
</comment>
<proteinExistence type="inferred from homology"/>
<reference key="1">
    <citation type="journal article" date="2001" name="Proc. Natl. Acad. Sci. U.S.A.">
        <title>Genome sequence of an industrial microorganism Streptomyces avermitilis: deducing the ability of producing secondary metabolites.</title>
        <authorList>
            <person name="Omura S."/>
            <person name="Ikeda H."/>
            <person name="Ishikawa J."/>
            <person name="Hanamoto A."/>
            <person name="Takahashi C."/>
            <person name="Shinose M."/>
            <person name="Takahashi Y."/>
            <person name="Horikawa H."/>
            <person name="Nakazawa H."/>
            <person name="Osonoe T."/>
            <person name="Kikuchi H."/>
            <person name="Shiba T."/>
            <person name="Sakaki Y."/>
            <person name="Hattori M."/>
        </authorList>
    </citation>
    <scope>NUCLEOTIDE SEQUENCE [LARGE SCALE GENOMIC DNA]</scope>
    <source>
        <strain>ATCC 31267 / DSM 46492 / JCM 5070 / NBRC 14893 / NCIMB 12804 / NRRL 8165 / MA-4680</strain>
    </source>
</reference>
<reference key="2">
    <citation type="journal article" date="2003" name="Nat. Biotechnol.">
        <title>Complete genome sequence and comparative analysis of the industrial microorganism Streptomyces avermitilis.</title>
        <authorList>
            <person name="Ikeda H."/>
            <person name="Ishikawa J."/>
            <person name="Hanamoto A."/>
            <person name="Shinose M."/>
            <person name="Kikuchi H."/>
            <person name="Shiba T."/>
            <person name="Sakaki Y."/>
            <person name="Hattori M."/>
            <person name="Omura S."/>
        </authorList>
    </citation>
    <scope>NUCLEOTIDE SEQUENCE [LARGE SCALE GENOMIC DNA]</scope>
    <source>
        <strain>ATCC 31267 / DSM 46492 / JCM 5070 / NBRC 14893 / NCIMB 12804 / NRRL 8165 / MA-4680</strain>
    </source>
</reference>
<sequence>MTPYLAAEDLSMFGRDPWWLVVVKAVFCFAFLMITVLFSIVWERKVVAWMQLRIGPNRHGPWGMLQSLADGIKLMLKEDLIVKRADKVVYVLAPIVAAIPAFMAIAVIPFGPADNEISIFGHRTAMQLTDLPIAMLYILAVASVGIYGIVLAGWSSGSTYPLLGGLRSCAQMISYEIAMGAAFASVFLYSGSMSTSTIVEQQHDRWYIVLLPVSFVIYIVTMVGETNRAPFDMPESEGDLVGGFNTEYSSIKFAMFMLAEYVNMVTVSAVSTTLFLGGWRAPWPISTFWEGANHGWWPMLWFVVKVQLLLFFFIWLRGTLPRVRYDQLMKLGWKVLIPVSVVWLMLVATVRTLRNENYDFADIALYVGGGVLVLLLLSFVADMFREKSKEAAAPAEEPAAFDPMAGGFPVPPLPGQTLPPVPRRRPRRDRELIVSGGPDTASDGPANGKEASDG</sequence>
<name>NUOH_STRAW</name>
<accession>Q82DX4</accession>
<organism>
    <name type="scientific">Streptomyces avermitilis (strain ATCC 31267 / DSM 46492 / JCM 5070 / NBRC 14893 / NCIMB 12804 / NRRL 8165 / MA-4680)</name>
    <dbReference type="NCBI Taxonomy" id="227882"/>
    <lineage>
        <taxon>Bacteria</taxon>
        <taxon>Bacillati</taxon>
        <taxon>Actinomycetota</taxon>
        <taxon>Actinomycetes</taxon>
        <taxon>Kitasatosporales</taxon>
        <taxon>Streptomycetaceae</taxon>
        <taxon>Streptomyces</taxon>
    </lineage>
</organism>
<feature type="chain" id="PRO_0000240111" description="NADH-quinone oxidoreductase subunit H">
    <location>
        <begin position="1"/>
        <end position="454"/>
    </location>
</feature>
<feature type="transmembrane region" description="Helical" evidence="1">
    <location>
        <begin position="18"/>
        <end position="38"/>
    </location>
</feature>
<feature type="transmembrane region" description="Helical" evidence="1">
    <location>
        <begin position="88"/>
        <end position="108"/>
    </location>
</feature>
<feature type="transmembrane region" description="Helical" evidence="1">
    <location>
        <begin position="131"/>
        <end position="151"/>
    </location>
</feature>
<feature type="transmembrane region" description="Helical" evidence="1">
    <location>
        <begin position="172"/>
        <end position="192"/>
    </location>
</feature>
<feature type="transmembrane region" description="Helical" evidence="1">
    <location>
        <begin position="206"/>
        <end position="226"/>
    </location>
</feature>
<feature type="transmembrane region" description="Helical" evidence="1">
    <location>
        <begin position="256"/>
        <end position="276"/>
    </location>
</feature>
<feature type="transmembrane region" description="Helical" evidence="1">
    <location>
        <begin position="296"/>
        <end position="316"/>
    </location>
</feature>
<feature type="transmembrane region" description="Helical" evidence="1">
    <location>
        <begin position="328"/>
        <end position="348"/>
    </location>
</feature>
<feature type="transmembrane region" description="Helical" evidence="1">
    <location>
        <begin position="360"/>
        <end position="380"/>
    </location>
</feature>
<feature type="region of interest" description="Disordered" evidence="2">
    <location>
        <begin position="395"/>
        <end position="454"/>
    </location>
</feature>
<feature type="compositionally biased region" description="Pro residues" evidence="2">
    <location>
        <begin position="409"/>
        <end position="421"/>
    </location>
</feature>
<gene>
    <name evidence="1" type="primary">nuoH</name>
    <name type="synonym">nuoH1</name>
    <name type="ordered locus">SAV_4844</name>
</gene>
<evidence type="ECO:0000255" key="1">
    <source>
        <dbReference type="HAMAP-Rule" id="MF_01350"/>
    </source>
</evidence>
<evidence type="ECO:0000256" key="2">
    <source>
        <dbReference type="SAM" id="MobiDB-lite"/>
    </source>
</evidence>